<feature type="chain" id="PRO_0000321197" description="Ribosome-binding factor A">
    <location>
        <begin position="1"/>
        <end position="125"/>
    </location>
</feature>
<reference key="1">
    <citation type="submission" date="2006-12" db="EMBL/GenBank/DDBJ databases">
        <title>Complete sequence of chromosome 1 of Acidovorax sp. JS42.</title>
        <authorList>
            <person name="Copeland A."/>
            <person name="Lucas S."/>
            <person name="Lapidus A."/>
            <person name="Barry K."/>
            <person name="Detter J.C."/>
            <person name="Glavina del Rio T."/>
            <person name="Dalin E."/>
            <person name="Tice H."/>
            <person name="Pitluck S."/>
            <person name="Chertkov O."/>
            <person name="Brettin T."/>
            <person name="Bruce D."/>
            <person name="Han C."/>
            <person name="Tapia R."/>
            <person name="Gilna P."/>
            <person name="Schmutz J."/>
            <person name="Larimer F."/>
            <person name="Land M."/>
            <person name="Hauser L."/>
            <person name="Kyrpides N."/>
            <person name="Kim E."/>
            <person name="Stahl D."/>
            <person name="Richardson P."/>
        </authorList>
    </citation>
    <scope>NUCLEOTIDE SEQUENCE [LARGE SCALE GENOMIC DNA]</scope>
    <source>
        <strain>JS42</strain>
    </source>
</reference>
<sequence>MAAKKSSSPNRGFKVADQIQRDLTELIRDLKDPRIGMVTLQGVEVTPDYAHAKVFFSVLIGDGEASEEALNQAAGFLRNGLFKRLHIHTVPTLHFVYDRTTEKAADMNALIARAVASRSKDDDAA</sequence>
<name>RBFA_ACISJ</name>
<comment type="function">
    <text evidence="1">One of several proteins that assist in the late maturation steps of the functional core of the 30S ribosomal subunit. Associates with free 30S ribosomal subunits (but not with 30S subunits that are part of 70S ribosomes or polysomes). Required for efficient processing of 16S rRNA. May interact with the 5'-terminal helix region of 16S rRNA.</text>
</comment>
<comment type="subunit">
    <text evidence="1">Monomer. Binds 30S ribosomal subunits, but not 50S ribosomal subunits or 70S ribosomes.</text>
</comment>
<comment type="subcellular location">
    <subcellularLocation>
        <location evidence="1">Cytoplasm</location>
    </subcellularLocation>
</comment>
<comment type="similarity">
    <text evidence="1">Belongs to the RbfA family.</text>
</comment>
<protein>
    <recommendedName>
        <fullName evidence="1">Ribosome-binding factor A</fullName>
    </recommendedName>
</protein>
<proteinExistence type="inferred from homology"/>
<organism>
    <name type="scientific">Acidovorax sp. (strain JS42)</name>
    <dbReference type="NCBI Taxonomy" id="232721"/>
    <lineage>
        <taxon>Bacteria</taxon>
        <taxon>Pseudomonadati</taxon>
        <taxon>Pseudomonadota</taxon>
        <taxon>Betaproteobacteria</taxon>
        <taxon>Burkholderiales</taxon>
        <taxon>Comamonadaceae</taxon>
        <taxon>Acidovorax</taxon>
    </lineage>
</organism>
<accession>A1W8Z3</accession>
<dbReference type="EMBL" id="CP000539">
    <property type="protein sequence ID" value="ABM42718.1"/>
    <property type="molecule type" value="Genomic_DNA"/>
</dbReference>
<dbReference type="SMR" id="A1W8Z3"/>
<dbReference type="STRING" id="232721.Ajs_2560"/>
<dbReference type="KEGG" id="ajs:Ajs_2560"/>
<dbReference type="eggNOG" id="COG0858">
    <property type="taxonomic scope" value="Bacteria"/>
</dbReference>
<dbReference type="HOGENOM" id="CLU_089475_5_1_4"/>
<dbReference type="Proteomes" id="UP000000645">
    <property type="component" value="Chromosome"/>
</dbReference>
<dbReference type="GO" id="GO:0005829">
    <property type="term" value="C:cytosol"/>
    <property type="evidence" value="ECO:0007669"/>
    <property type="project" value="TreeGrafter"/>
</dbReference>
<dbReference type="GO" id="GO:0043024">
    <property type="term" value="F:ribosomal small subunit binding"/>
    <property type="evidence" value="ECO:0007669"/>
    <property type="project" value="TreeGrafter"/>
</dbReference>
<dbReference type="GO" id="GO:0030490">
    <property type="term" value="P:maturation of SSU-rRNA"/>
    <property type="evidence" value="ECO:0007669"/>
    <property type="project" value="UniProtKB-UniRule"/>
</dbReference>
<dbReference type="Gene3D" id="3.30.300.20">
    <property type="match status" value="1"/>
</dbReference>
<dbReference type="HAMAP" id="MF_00003">
    <property type="entry name" value="RbfA"/>
    <property type="match status" value="1"/>
</dbReference>
<dbReference type="InterPro" id="IPR015946">
    <property type="entry name" value="KH_dom-like_a/b"/>
</dbReference>
<dbReference type="InterPro" id="IPR000238">
    <property type="entry name" value="RbfA"/>
</dbReference>
<dbReference type="InterPro" id="IPR023799">
    <property type="entry name" value="RbfA_dom_sf"/>
</dbReference>
<dbReference type="NCBIfam" id="TIGR00082">
    <property type="entry name" value="rbfA"/>
    <property type="match status" value="1"/>
</dbReference>
<dbReference type="PANTHER" id="PTHR33515">
    <property type="entry name" value="RIBOSOME-BINDING FACTOR A, CHLOROPLASTIC-RELATED"/>
    <property type="match status" value="1"/>
</dbReference>
<dbReference type="PANTHER" id="PTHR33515:SF1">
    <property type="entry name" value="RIBOSOME-BINDING FACTOR A, CHLOROPLASTIC-RELATED"/>
    <property type="match status" value="1"/>
</dbReference>
<dbReference type="Pfam" id="PF02033">
    <property type="entry name" value="RBFA"/>
    <property type="match status" value="1"/>
</dbReference>
<dbReference type="SUPFAM" id="SSF89919">
    <property type="entry name" value="Ribosome-binding factor A, RbfA"/>
    <property type="match status" value="1"/>
</dbReference>
<evidence type="ECO:0000255" key="1">
    <source>
        <dbReference type="HAMAP-Rule" id="MF_00003"/>
    </source>
</evidence>
<keyword id="KW-0963">Cytoplasm</keyword>
<keyword id="KW-0690">Ribosome biogenesis</keyword>
<gene>
    <name evidence="1" type="primary">rbfA</name>
    <name type="ordered locus">Ajs_2560</name>
</gene>